<keyword id="KW-0143">Chaperone</keyword>
<keyword id="KW-0963">Cytoplasm</keyword>
<keyword id="KW-0235">DNA replication</keyword>
<keyword id="KW-0479">Metal-binding</keyword>
<keyword id="KW-1185">Reference proteome</keyword>
<keyword id="KW-0677">Repeat</keyword>
<keyword id="KW-0346">Stress response</keyword>
<keyword id="KW-0862">Zinc</keyword>
<keyword id="KW-0863">Zinc-finger</keyword>
<reference key="1">
    <citation type="submission" date="2006-12" db="EMBL/GenBank/DDBJ databases">
        <title>Complete sequence of Shewanella amazonensis SB2B.</title>
        <authorList>
            <consortium name="US DOE Joint Genome Institute"/>
            <person name="Copeland A."/>
            <person name="Lucas S."/>
            <person name="Lapidus A."/>
            <person name="Barry K."/>
            <person name="Detter J.C."/>
            <person name="Glavina del Rio T."/>
            <person name="Hammon N."/>
            <person name="Israni S."/>
            <person name="Dalin E."/>
            <person name="Tice H."/>
            <person name="Pitluck S."/>
            <person name="Munk A.C."/>
            <person name="Brettin T."/>
            <person name="Bruce D."/>
            <person name="Han C."/>
            <person name="Tapia R."/>
            <person name="Gilna P."/>
            <person name="Schmutz J."/>
            <person name="Larimer F."/>
            <person name="Land M."/>
            <person name="Hauser L."/>
            <person name="Kyrpides N."/>
            <person name="Mikhailova N."/>
            <person name="Fredrickson J."/>
            <person name="Richardson P."/>
        </authorList>
    </citation>
    <scope>NUCLEOTIDE SEQUENCE [LARGE SCALE GENOMIC DNA]</scope>
    <source>
        <strain>ATCC BAA-1098 / SB2B</strain>
    </source>
</reference>
<accession>A1S8K6</accession>
<name>DNAJ_SHEAM</name>
<organism>
    <name type="scientific">Shewanella amazonensis (strain ATCC BAA-1098 / SB2B)</name>
    <dbReference type="NCBI Taxonomy" id="326297"/>
    <lineage>
        <taxon>Bacteria</taxon>
        <taxon>Pseudomonadati</taxon>
        <taxon>Pseudomonadota</taxon>
        <taxon>Gammaproteobacteria</taxon>
        <taxon>Alteromonadales</taxon>
        <taxon>Shewanellaceae</taxon>
        <taxon>Shewanella</taxon>
    </lineage>
</organism>
<dbReference type="EMBL" id="CP000507">
    <property type="protein sequence ID" value="ABM00713.1"/>
    <property type="molecule type" value="Genomic_DNA"/>
</dbReference>
<dbReference type="RefSeq" id="WP_011760619.1">
    <property type="nucleotide sequence ID" value="NC_008700.1"/>
</dbReference>
<dbReference type="SMR" id="A1S8K6"/>
<dbReference type="STRING" id="326297.Sama_2510"/>
<dbReference type="KEGG" id="saz:Sama_2510"/>
<dbReference type="eggNOG" id="COG0484">
    <property type="taxonomic scope" value="Bacteria"/>
</dbReference>
<dbReference type="HOGENOM" id="CLU_017633_0_7_6"/>
<dbReference type="OrthoDB" id="9779889at2"/>
<dbReference type="Proteomes" id="UP000009175">
    <property type="component" value="Chromosome"/>
</dbReference>
<dbReference type="GO" id="GO:0005737">
    <property type="term" value="C:cytoplasm"/>
    <property type="evidence" value="ECO:0007669"/>
    <property type="project" value="UniProtKB-SubCell"/>
</dbReference>
<dbReference type="GO" id="GO:0005524">
    <property type="term" value="F:ATP binding"/>
    <property type="evidence" value="ECO:0007669"/>
    <property type="project" value="InterPro"/>
</dbReference>
<dbReference type="GO" id="GO:0031072">
    <property type="term" value="F:heat shock protein binding"/>
    <property type="evidence" value="ECO:0007669"/>
    <property type="project" value="InterPro"/>
</dbReference>
<dbReference type="GO" id="GO:0051082">
    <property type="term" value="F:unfolded protein binding"/>
    <property type="evidence" value="ECO:0007669"/>
    <property type="project" value="UniProtKB-UniRule"/>
</dbReference>
<dbReference type="GO" id="GO:0008270">
    <property type="term" value="F:zinc ion binding"/>
    <property type="evidence" value="ECO:0007669"/>
    <property type="project" value="UniProtKB-UniRule"/>
</dbReference>
<dbReference type="GO" id="GO:0051085">
    <property type="term" value="P:chaperone cofactor-dependent protein refolding"/>
    <property type="evidence" value="ECO:0007669"/>
    <property type="project" value="TreeGrafter"/>
</dbReference>
<dbReference type="GO" id="GO:0006260">
    <property type="term" value="P:DNA replication"/>
    <property type="evidence" value="ECO:0007669"/>
    <property type="project" value="UniProtKB-KW"/>
</dbReference>
<dbReference type="GO" id="GO:0042026">
    <property type="term" value="P:protein refolding"/>
    <property type="evidence" value="ECO:0007669"/>
    <property type="project" value="TreeGrafter"/>
</dbReference>
<dbReference type="GO" id="GO:0009408">
    <property type="term" value="P:response to heat"/>
    <property type="evidence" value="ECO:0007669"/>
    <property type="project" value="InterPro"/>
</dbReference>
<dbReference type="CDD" id="cd06257">
    <property type="entry name" value="DnaJ"/>
    <property type="match status" value="1"/>
</dbReference>
<dbReference type="CDD" id="cd10747">
    <property type="entry name" value="DnaJ_C"/>
    <property type="match status" value="1"/>
</dbReference>
<dbReference type="CDD" id="cd10719">
    <property type="entry name" value="DnaJ_zf"/>
    <property type="match status" value="1"/>
</dbReference>
<dbReference type="FunFam" id="1.10.287.110:FF:000003">
    <property type="entry name" value="Molecular chaperone DnaJ"/>
    <property type="match status" value="1"/>
</dbReference>
<dbReference type="FunFam" id="2.10.230.10:FF:000002">
    <property type="entry name" value="Molecular chaperone DnaJ"/>
    <property type="match status" value="1"/>
</dbReference>
<dbReference type="FunFam" id="2.60.260.20:FF:000004">
    <property type="entry name" value="Molecular chaperone DnaJ"/>
    <property type="match status" value="1"/>
</dbReference>
<dbReference type="Gene3D" id="1.10.287.110">
    <property type="entry name" value="DnaJ domain"/>
    <property type="match status" value="1"/>
</dbReference>
<dbReference type="Gene3D" id="2.10.230.10">
    <property type="entry name" value="Heat shock protein DnaJ, cysteine-rich domain"/>
    <property type="match status" value="1"/>
</dbReference>
<dbReference type="Gene3D" id="2.60.260.20">
    <property type="entry name" value="Urease metallochaperone UreE, N-terminal domain"/>
    <property type="match status" value="2"/>
</dbReference>
<dbReference type="HAMAP" id="MF_01152">
    <property type="entry name" value="DnaJ"/>
    <property type="match status" value="1"/>
</dbReference>
<dbReference type="InterPro" id="IPR012724">
    <property type="entry name" value="DnaJ"/>
</dbReference>
<dbReference type="InterPro" id="IPR002939">
    <property type="entry name" value="DnaJ_C"/>
</dbReference>
<dbReference type="InterPro" id="IPR001623">
    <property type="entry name" value="DnaJ_domain"/>
</dbReference>
<dbReference type="InterPro" id="IPR018253">
    <property type="entry name" value="DnaJ_domain_CS"/>
</dbReference>
<dbReference type="InterPro" id="IPR008971">
    <property type="entry name" value="HSP40/DnaJ_pept-bd"/>
</dbReference>
<dbReference type="InterPro" id="IPR001305">
    <property type="entry name" value="HSP_DnaJ_Cys-rich_dom"/>
</dbReference>
<dbReference type="InterPro" id="IPR036410">
    <property type="entry name" value="HSP_DnaJ_Cys-rich_dom_sf"/>
</dbReference>
<dbReference type="InterPro" id="IPR036869">
    <property type="entry name" value="J_dom_sf"/>
</dbReference>
<dbReference type="NCBIfam" id="TIGR02349">
    <property type="entry name" value="DnaJ_bact"/>
    <property type="match status" value="1"/>
</dbReference>
<dbReference type="NCBIfam" id="NF008035">
    <property type="entry name" value="PRK10767.1"/>
    <property type="match status" value="1"/>
</dbReference>
<dbReference type="PANTHER" id="PTHR43096:SF48">
    <property type="entry name" value="CHAPERONE PROTEIN DNAJ"/>
    <property type="match status" value="1"/>
</dbReference>
<dbReference type="PANTHER" id="PTHR43096">
    <property type="entry name" value="DNAJ HOMOLOG 1, MITOCHONDRIAL-RELATED"/>
    <property type="match status" value="1"/>
</dbReference>
<dbReference type="Pfam" id="PF00226">
    <property type="entry name" value="DnaJ"/>
    <property type="match status" value="1"/>
</dbReference>
<dbReference type="Pfam" id="PF01556">
    <property type="entry name" value="DnaJ_C"/>
    <property type="match status" value="1"/>
</dbReference>
<dbReference type="Pfam" id="PF00684">
    <property type="entry name" value="DnaJ_CXXCXGXG"/>
    <property type="match status" value="1"/>
</dbReference>
<dbReference type="PRINTS" id="PR00625">
    <property type="entry name" value="JDOMAIN"/>
</dbReference>
<dbReference type="SMART" id="SM00271">
    <property type="entry name" value="DnaJ"/>
    <property type="match status" value="1"/>
</dbReference>
<dbReference type="SUPFAM" id="SSF46565">
    <property type="entry name" value="Chaperone J-domain"/>
    <property type="match status" value="1"/>
</dbReference>
<dbReference type="SUPFAM" id="SSF57938">
    <property type="entry name" value="DnaJ/Hsp40 cysteine-rich domain"/>
    <property type="match status" value="1"/>
</dbReference>
<dbReference type="SUPFAM" id="SSF49493">
    <property type="entry name" value="HSP40/DnaJ peptide-binding domain"/>
    <property type="match status" value="2"/>
</dbReference>
<dbReference type="PROSITE" id="PS00636">
    <property type="entry name" value="DNAJ_1"/>
    <property type="match status" value="1"/>
</dbReference>
<dbReference type="PROSITE" id="PS50076">
    <property type="entry name" value="DNAJ_2"/>
    <property type="match status" value="1"/>
</dbReference>
<dbReference type="PROSITE" id="PS51188">
    <property type="entry name" value="ZF_CR"/>
    <property type="match status" value="1"/>
</dbReference>
<feature type="chain" id="PRO_1000085286" description="Chaperone protein DnaJ">
    <location>
        <begin position="1"/>
        <end position="376"/>
    </location>
</feature>
<feature type="domain" description="J" evidence="1">
    <location>
        <begin position="5"/>
        <end position="70"/>
    </location>
</feature>
<feature type="repeat" description="CXXCXGXG motif">
    <location>
        <begin position="145"/>
        <end position="152"/>
    </location>
</feature>
<feature type="repeat" description="CXXCXGXG motif">
    <location>
        <begin position="162"/>
        <end position="169"/>
    </location>
</feature>
<feature type="repeat" description="CXXCXGXG motif">
    <location>
        <begin position="184"/>
        <end position="191"/>
    </location>
</feature>
<feature type="repeat" description="CXXCXGXG motif">
    <location>
        <begin position="198"/>
        <end position="205"/>
    </location>
</feature>
<feature type="zinc finger region" description="CR-type" evidence="1">
    <location>
        <begin position="132"/>
        <end position="210"/>
    </location>
</feature>
<feature type="binding site" evidence="1">
    <location>
        <position position="145"/>
    </location>
    <ligand>
        <name>Zn(2+)</name>
        <dbReference type="ChEBI" id="CHEBI:29105"/>
        <label>1</label>
    </ligand>
</feature>
<feature type="binding site" evidence="1">
    <location>
        <position position="148"/>
    </location>
    <ligand>
        <name>Zn(2+)</name>
        <dbReference type="ChEBI" id="CHEBI:29105"/>
        <label>1</label>
    </ligand>
</feature>
<feature type="binding site" evidence="1">
    <location>
        <position position="162"/>
    </location>
    <ligand>
        <name>Zn(2+)</name>
        <dbReference type="ChEBI" id="CHEBI:29105"/>
        <label>2</label>
    </ligand>
</feature>
<feature type="binding site" evidence="1">
    <location>
        <position position="165"/>
    </location>
    <ligand>
        <name>Zn(2+)</name>
        <dbReference type="ChEBI" id="CHEBI:29105"/>
        <label>2</label>
    </ligand>
</feature>
<feature type="binding site" evidence="1">
    <location>
        <position position="184"/>
    </location>
    <ligand>
        <name>Zn(2+)</name>
        <dbReference type="ChEBI" id="CHEBI:29105"/>
        <label>2</label>
    </ligand>
</feature>
<feature type="binding site" evidence="1">
    <location>
        <position position="187"/>
    </location>
    <ligand>
        <name>Zn(2+)</name>
        <dbReference type="ChEBI" id="CHEBI:29105"/>
        <label>2</label>
    </ligand>
</feature>
<feature type="binding site" evidence="1">
    <location>
        <position position="198"/>
    </location>
    <ligand>
        <name>Zn(2+)</name>
        <dbReference type="ChEBI" id="CHEBI:29105"/>
        <label>1</label>
    </ligand>
</feature>
<feature type="binding site" evidence="1">
    <location>
        <position position="201"/>
    </location>
    <ligand>
        <name>Zn(2+)</name>
        <dbReference type="ChEBI" id="CHEBI:29105"/>
        <label>1</label>
    </ligand>
</feature>
<evidence type="ECO:0000255" key="1">
    <source>
        <dbReference type="HAMAP-Rule" id="MF_01152"/>
    </source>
</evidence>
<proteinExistence type="inferred from homology"/>
<gene>
    <name evidence="1" type="primary">dnaJ</name>
    <name type="ordered locus">Sama_2510</name>
</gene>
<sequence length="376" mass="40666">MSKRDYYEVLGVGRDASEREIKKAYKRLAMKYHPDRNPGDKEAEASFKEVKEAYEILTDTDKKAAYDQFGHAGVDPNRGGGGFGGGGDFGDIFGDVFGDIFGGGRRGGQRQAARGSDLRYNLELSLEEAVRGLTKELKVPTLVGCDSCDGSGAKKGSSATTCGTCHGMGQVQMRQGFFAVQQTCPTCHGRGKIIKDPCSKCHGNGRVEKTKTLSVKIPAGVDTGDRIRLAGEGEAGEFGAPPGDLYVQVTVREHPIFVRDGNNLYCEVPISFAKAALGGEIEVPTLDGKVSLKIPAETQTGRMFRLRGKGVKSVRSHAVGDLLCKVVMETPVNLSERQKELLREFEASLTGESKKHSPKAEGFFDGVKKFFQDLNN</sequence>
<comment type="function">
    <text evidence="1">Participates actively in the response to hyperosmotic and heat shock by preventing the aggregation of stress-denatured proteins and by disaggregating proteins, also in an autonomous, DnaK-independent fashion. Unfolded proteins bind initially to DnaJ; upon interaction with the DnaJ-bound protein, DnaK hydrolyzes its bound ATP, resulting in the formation of a stable complex. GrpE releases ADP from DnaK; ATP binding to DnaK triggers the release of the substrate protein, thus completing the reaction cycle. Several rounds of ATP-dependent interactions between DnaJ, DnaK and GrpE are required for fully efficient folding. Also involved, together with DnaK and GrpE, in the DNA replication of plasmids through activation of initiation proteins.</text>
</comment>
<comment type="cofactor">
    <cofactor evidence="1">
        <name>Zn(2+)</name>
        <dbReference type="ChEBI" id="CHEBI:29105"/>
    </cofactor>
    <text evidence="1">Binds 2 Zn(2+) ions per monomer.</text>
</comment>
<comment type="subunit">
    <text evidence="1">Homodimer.</text>
</comment>
<comment type="subcellular location">
    <subcellularLocation>
        <location evidence="1">Cytoplasm</location>
    </subcellularLocation>
</comment>
<comment type="domain">
    <text evidence="1">The J domain is necessary and sufficient to stimulate DnaK ATPase activity. Zinc center 1 plays an important role in the autonomous, DnaK-independent chaperone activity of DnaJ. Zinc center 2 is essential for interaction with DnaK and for DnaJ activity.</text>
</comment>
<comment type="similarity">
    <text evidence="1">Belongs to the DnaJ family.</text>
</comment>
<protein>
    <recommendedName>
        <fullName evidence="1">Chaperone protein DnaJ</fullName>
    </recommendedName>
</protein>